<dbReference type="EC" id="5.3.4.1" evidence="1"/>
<dbReference type="EMBL" id="AE014134">
    <property type="protein sequence ID" value="AAF53532.1"/>
    <property type="molecule type" value="Genomic_DNA"/>
</dbReference>
<dbReference type="EMBL" id="AE014134">
    <property type="protein sequence ID" value="AHN54493.1"/>
    <property type="molecule type" value="Genomic_DNA"/>
</dbReference>
<dbReference type="EMBL" id="AY061349">
    <property type="protein sequence ID" value="AAL28897.1"/>
    <property type="molecule type" value="mRNA"/>
</dbReference>
<dbReference type="RefSeq" id="NP_001285979.1">
    <property type="nucleotide sequence ID" value="NM_001299050.1"/>
</dbReference>
<dbReference type="RefSeq" id="NP_609792.1">
    <property type="nucleotide sequence ID" value="NM_135948.4"/>
</dbReference>
<dbReference type="SMR" id="Q9V438"/>
<dbReference type="FunCoup" id="Q9V438">
    <property type="interactions" value="1701"/>
</dbReference>
<dbReference type="IntAct" id="Q9V438">
    <property type="interactions" value="86"/>
</dbReference>
<dbReference type="STRING" id="7227.FBpp0311643"/>
<dbReference type="GlyCosmos" id="Q9V438">
    <property type="glycosylation" value="1 site, No reported glycans"/>
</dbReference>
<dbReference type="GlyGen" id="Q9V438">
    <property type="glycosylation" value="1 site"/>
</dbReference>
<dbReference type="PaxDb" id="7227-FBpp0080395"/>
<dbReference type="DNASU" id="34976"/>
<dbReference type="EnsemblMetazoa" id="FBtr0080837">
    <property type="protein sequence ID" value="FBpp0080395"/>
    <property type="gene ID" value="FBgn0025678"/>
</dbReference>
<dbReference type="EnsemblMetazoa" id="FBtr0345544">
    <property type="protein sequence ID" value="FBpp0311643"/>
    <property type="gene ID" value="FBgn0025678"/>
</dbReference>
<dbReference type="GeneID" id="34976"/>
<dbReference type="KEGG" id="dme:Dmel_CG5809"/>
<dbReference type="UCSC" id="CG5809-RA">
    <property type="organism name" value="d. melanogaster"/>
</dbReference>
<dbReference type="AGR" id="FB:FBgn0025678"/>
<dbReference type="CTD" id="9478"/>
<dbReference type="FlyBase" id="FBgn0025678">
    <property type="gene designation" value="CaBP1"/>
</dbReference>
<dbReference type="VEuPathDB" id="VectorBase:FBgn0025678"/>
<dbReference type="eggNOG" id="KOG0191">
    <property type="taxonomic scope" value="Eukaryota"/>
</dbReference>
<dbReference type="GeneTree" id="ENSGT00940000155646"/>
<dbReference type="HOGENOM" id="CLU_030311_0_0_1"/>
<dbReference type="InParanoid" id="Q9V438"/>
<dbReference type="OMA" id="KQKLWGW"/>
<dbReference type="OrthoDB" id="10264505at2759"/>
<dbReference type="PhylomeDB" id="Q9V438"/>
<dbReference type="Reactome" id="R-DME-381426">
    <property type="pathway name" value="Regulation of Insulin-like Growth Factor (IGF) transport and uptake by Insulin-like Growth Factor Binding Proteins (IGFBPs)"/>
</dbReference>
<dbReference type="Reactome" id="R-DME-8957275">
    <property type="pathway name" value="Post-translational protein phosphorylation"/>
</dbReference>
<dbReference type="SignaLink" id="Q9V438"/>
<dbReference type="BioGRID-ORCS" id="34976">
    <property type="hits" value="0 hits in 1 CRISPR screen"/>
</dbReference>
<dbReference type="GenomeRNAi" id="34976"/>
<dbReference type="PRO" id="PR:Q9V438"/>
<dbReference type="Proteomes" id="UP000000803">
    <property type="component" value="Chromosome 2L"/>
</dbReference>
<dbReference type="Bgee" id="FBgn0025678">
    <property type="expression patterns" value="Expressed in spermatid in male reproductive gland and 154 other cell types or tissues"/>
</dbReference>
<dbReference type="GO" id="GO:0009986">
    <property type="term" value="C:cell surface"/>
    <property type="evidence" value="ECO:0007669"/>
    <property type="project" value="UniProtKB-SubCell"/>
</dbReference>
<dbReference type="GO" id="GO:0012505">
    <property type="term" value="C:endomembrane system"/>
    <property type="evidence" value="ECO:0007005"/>
    <property type="project" value="FlyBase"/>
</dbReference>
<dbReference type="GO" id="GO:0005783">
    <property type="term" value="C:endoplasmic reticulum"/>
    <property type="evidence" value="ECO:0000314"/>
    <property type="project" value="FlyBase"/>
</dbReference>
<dbReference type="GO" id="GO:0005788">
    <property type="term" value="C:endoplasmic reticulum lumen"/>
    <property type="evidence" value="ECO:0007669"/>
    <property type="project" value="UniProtKB-SubCell"/>
</dbReference>
<dbReference type="GO" id="GO:0003756">
    <property type="term" value="F:protein disulfide isomerase activity"/>
    <property type="evidence" value="ECO:0007669"/>
    <property type="project" value="UniProtKB-EC"/>
</dbReference>
<dbReference type="GO" id="GO:0015035">
    <property type="term" value="F:protein-disulfide reductase activity"/>
    <property type="evidence" value="ECO:0000318"/>
    <property type="project" value="GO_Central"/>
</dbReference>
<dbReference type="GO" id="GO:0006909">
    <property type="term" value="P:phagocytosis"/>
    <property type="evidence" value="ECO:0007669"/>
    <property type="project" value="UniProtKB-KW"/>
</dbReference>
<dbReference type="GO" id="GO:2000427">
    <property type="term" value="P:positive regulation of apoptotic cell clearance"/>
    <property type="evidence" value="ECO:0000314"/>
    <property type="project" value="FlyBase"/>
</dbReference>
<dbReference type="GO" id="GO:0034976">
    <property type="term" value="P:response to endoplasmic reticulum stress"/>
    <property type="evidence" value="ECO:0000318"/>
    <property type="project" value="GO_Central"/>
</dbReference>
<dbReference type="CDD" id="cd02983">
    <property type="entry name" value="P5_C"/>
    <property type="match status" value="1"/>
</dbReference>
<dbReference type="CDD" id="cd03001">
    <property type="entry name" value="PDI_a_P5"/>
    <property type="match status" value="2"/>
</dbReference>
<dbReference type="FunFam" id="3.40.30.10:FF:000032">
    <property type="entry name" value="Protein disulfide-isomerase A6 homolog"/>
    <property type="match status" value="1"/>
</dbReference>
<dbReference type="FunFam" id="3.40.30.10:FF:000050">
    <property type="entry name" value="protein disulfide-isomerase A6 isoform X1"/>
    <property type="match status" value="1"/>
</dbReference>
<dbReference type="Gene3D" id="3.40.30.10">
    <property type="entry name" value="Glutaredoxin"/>
    <property type="match status" value="3"/>
</dbReference>
<dbReference type="InterPro" id="IPR005788">
    <property type="entry name" value="PDI_thioredoxin-like_dom"/>
</dbReference>
<dbReference type="InterPro" id="IPR036249">
    <property type="entry name" value="Thioredoxin-like_sf"/>
</dbReference>
<dbReference type="InterPro" id="IPR017937">
    <property type="entry name" value="Thioredoxin_CS"/>
</dbReference>
<dbReference type="InterPro" id="IPR013766">
    <property type="entry name" value="Thioredoxin_domain"/>
</dbReference>
<dbReference type="NCBIfam" id="TIGR01126">
    <property type="entry name" value="pdi_dom"/>
    <property type="match status" value="2"/>
</dbReference>
<dbReference type="PANTHER" id="PTHR45815">
    <property type="entry name" value="PROTEIN DISULFIDE-ISOMERASE A6"/>
    <property type="match status" value="1"/>
</dbReference>
<dbReference type="PANTHER" id="PTHR45815:SF3">
    <property type="entry name" value="PROTEIN DISULFIDE-ISOMERASE A6"/>
    <property type="match status" value="1"/>
</dbReference>
<dbReference type="Pfam" id="PF24541">
    <property type="entry name" value="Thioredox_PDIA6_C"/>
    <property type="match status" value="1"/>
</dbReference>
<dbReference type="Pfam" id="PF00085">
    <property type="entry name" value="Thioredoxin"/>
    <property type="match status" value="2"/>
</dbReference>
<dbReference type="PRINTS" id="PR00421">
    <property type="entry name" value="THIOREDOXIN"/>
</dbReference>
<dbReference type="SUPFAM" id="SSF52833">
    <property type="entry name" value="Thioredoxin-like"/>
    <property type="match status" value="3"/>
</dbReference>
<dbReference type="PROSITE" id="PS00014">
    <property type="entry name" value="ER_TARGET"/>
    <property type="match status" value="1"/>
</dbReference>
<dbReference type="PROSITE" id="PS00194">
    <property type="entry name" value="THIOREDOXIN_1"/>
    <property type="match status" value="2"/>
</dbReference>
<dbReference type="PROSITE" id="PS51352">
    <property type="entry name" value="THIOREDOXIN_2"/>
    <property type="match status" value="2"/>
</dbReference>
<name>PDIA6_DROME</name>
<sequence>MRQLASILLLAFVVGSVSAFYSPSDGVVELTPSNFDREVLKDDAIWVVEFYAPWCGHCQSLVPEYKKLAKALKGVVKVGSVNADADSTLSGQFGVRGFPTIKIFGANKKSPTDYNGQRTAKAIAEAALAEVKKKVQGVLGGGGGSSSGGSGSSSGDDVIELTEDNFDKLVLNSDDIWLVEFFAPWCGHCKNLAPEWAKAAKELKGKVKLGALDATAHQSKAAEYNVRGYPTIKFFPAGSKRASDAQEYDGGRTASDIVSWASDKHVANVPAPELIEIINESTFETACEGKPLCVVSVLPHILDCDAKCRNKFLDTLRTLGEKFKQKQWGWAWAEGGQQLALEESLEVGGFGYPAMAVVNFKKMKFSVLKGSFSKDGINEFLRDISYGRGHTAPVRGAKKPAIVSVDPWDGKDGQLPTEEDIDLSDIDLDKDEL</sequence>
<proteinExistence type="evidence at protein level"/>
<keyword id="KW-1015">Disulfide bond</keyword>
<keyword id="KW-0256">Endoplasmic reticulum</keyword>
<keyword id="KW-0325">Glycoprotein</keyword>
<keyword id="KW-0413">Isomerase</keyword>
<keyword id="KW-0581">Phagocytosis</keyword>
<keyword id="KW-0676">Redox-active center</keyword>
<keyword id="KW-1185">Reference proteome</keyword>
<keyword id="KW-0677">Repeat</keyword>
<keyword id="KW-0732">Signal</keyword>
<feature type="signal peptide" evidence="2">
    <location>
        <begin position="1"/>
        <end position="19"/>
    </location>
</feature>
<feature type="chain" id="PRO_5007929183" description="Protein disulfide-isomerase A6 homolog">
    <location>
        <begin position="20"/>
        <end position="433"/>
    </location>
</feature>
<feature type="domain" description="Thioredoxin 1" evidence="4">
    <location>
        <begin position="20"/>
        <end position="119"/>
    </location>
</feature>
<feature type="domain" description="Thioredoxin 2" evidence="4">
    <location>
        <begin position="120"/>
        <end position="267"/>
    </location>
</feature>
<feature type="region of interest" description="Disordered" evidence="7">
    <location>
        <begin position="405"/>
        <end position="433"/>
    </location>
</feature>
<feature type="short sequence motif" description="Prevents secretion from ER" evidence="5">
    <location>
        <begin position="430"/>
        <end position="433"/>
    </location>
</feature>
<feature type="compositionally biased region" description="Acidic residues" evidence="7">
    <location>
        <begin position="417"/>
        <end position="433"/>
    </location>
</feature>
<feature type="active site" description="Nucleophile" evidence="11">
    <location>
        <position position="55"/>
    </location>
</feature>
<feature type="active site" description="Nucleophile" evidence="11">
    <location>
        <position position="58"/>
    </location>
</feature>
<feature type="active site" description="Nucleophile" evidence="11">
    <location>
        <position position="186"/>
    </location>
</feature>
<feature type="active site" description="Nucleophile" evidence="11">
    <location>
        <position position="189"/>
    </location>
</feature>
<feature type="glycosylation site" description="N-linked (GlcNAc...) asparagine" evidence="3">
    <location>
        <position position="279"/>
    </location>
</feature>
<feature type="disulfide bond" description="Redox-active" evidence="4">
    <location>
        <begin position="55"/>
        <end position="58"/>
    </location>
</feature>
<feature type="disulfide bond" description="Redox-active" evidence="4">
    <location>
        <begin position="186"/>
        <end position="189"/>
    </location>
</feature>
<gene>
    <name evidence="13" type="primary">CaBP1</name>
    <name evidence="13" type="ORF">CG5809</name>
</gene>
<organism evidence="14">
    <name type="scientific">Drosophila melanogaster</name>
    <name type="common">Fruit fly</name>
    <dbReference type="NCBI Taxonomy" id="7227"/>
    <lineage>
        <taxon>Eukaryota</taxon>
        <taxon>Metazoa</taxon>
        <taxon>Ecdysozoa</taxon>
        <taxon>Arthropoda</taxon>
        <taxon>Hexapoda</taxon>
        <taxon>Insecta</taxon>
        <taxon>Pterygota</taxon>
        <taxon>Neoptera</taxon>
        <taxon>Endopterygota</taxon>
        <taxon>Diptera</taxon>
        <taxon>Brachycera</taxon>
        <taxon>Muscomorpha</taxon>
        <taxon>Ephydroidea</taxon>
        <taxon>Drosophilidae</taxon>
        <taxon>Drosophila</taxon>
        <taxon>Sophophora</taxon>
    </lineage>
</organism>
<accession>Q9V438</accession>
<evidence type="ECO:0000250" key="1">
    <source>
        <dbReference type="UniProtKB" id="Q15084"/>
    </source>
</evidence>
<evidence type="ECO:0000255" key="2"/>
<evidence type="ECO:0000255" key="3">
    <source>
        <dbReference type="PROSITE-ProRule" id="PRU00498"/>
    </source>
</evidence>
<evidence type="ECO:0000255" key="4">
    <source>
        <dbReference type="PROSITE-ProRule" id="PRU00691"/>
    </source>
</evidence>
<evidence type="ECO:0000255" key="5">
    <source>
        <dbReference type="PROSITE-ProRule" id="PRU10138"/>
    </source>
</evidence>
<evidence type="ECO:0000255" key="6">
    <source>
        <dbReference type="RuleBase" id="RU004208"/>
    </source>
</evidence>
<evidence type="ECO:0000256" key="7">
    <source>
        <dbReference type="SAM" id="MobiDB-lite"/>
    </source>
</evidence>
<evidence type="ECO:0000269" key="8">
    <source>
    </source>
</evidence>
<evidence type="ECO:0000269" key="9">
    <source>
    </source>
</evidence>
<evidence type="ECO:0000303" key="10">
    <source>
    </source>
</evidence>
<evidence type="ECO:0000305" key="11"/>
<evidence type="ECO:0000312" key="12">
    <source>
        <dbReference type="EMBL" id="AAL28897.1"/>
    </source>
</evidence>
<evidence type="ECO:0000312" key="13">
    <source>
        <dbReference type="FlyBase" id="FBgn0025678"/>
    </source>
</evidence>
<evidence type="ECO:0000312" key="14">
    <source>
        <dbReference type="Proteomes" id="UP000000803"/>
    </source>
</evidence>
<reference evidence="11" key="1">
    <citation type="journal article" date="1998" name="Dev. Genet.">
        <title>A homologue of the calcium-binding disulfide isomerase CaBP1 is expressed in the developing CNS of Drosophila melanogaster.</title>
        <authorList>
            <person name="Li Y."/>
            <person name="Musacchio M."/>
            <person name="Finkelstein R."/>
        </authorList>
    </citation>
    <scope>NUCLEOTIDE SEQUENCE [MRNA]</scope>
    <scope>TISSUE SPECIFICITY</scope>
</reference>
<reference evidence="14" key="2">
    <citation type="journal article" date="2000" name="Science">
        <title>The genome sequence of Drosophila melanogaster.</title>
        <authorList>
            <person name="Adams M.D."/>
            <person name="Celniker S.E."/>
            <person name="Holt R.A."/>
            <person name="Evans C.A."/>
            <person name="Gocayne J.D."/>
            <person name="Amanatides P.G."/>
            <person name="Scherer S.E."/>
            <person name="Li P.W."/>
            <person name="Hoskins R.A."/>
            <person name="Galle R.F."/>
            <person name="George R.A."/>
            <person name="Lewis S.E."/>
            <person name="Richards S."/>
            <person name="Ashburner M."/>
            <person name="Henderson S.N."/>
            <person name="Sutton G.G."/>
            <person name="Wortman J.R."/>
            <person name="Yandell M.D."/>
            <person name="Zhang Q."/>
            <person name="Chen L.X."/>
            <person name="Brandon R.C."/>
            <person name="Rogers Y.-H.C."/>
            <person name="Blazej R.G."/>
            <person name="Champe M."/>
            <person name="Pfeiffer B.D."/>
            <person name="Wan K.H."/>
            <person name="Doyle C."/>
            <person name="Baxter E.G."/>
            <person name="Helt G."/>
            <person name="Nelson C.R."/>
            <person name="Miklos G.L.G."/>
            <person name="Abril J.F."/>
            <person name="Agbayani A."/>
            <person name="An H.-J."/>
            <person name="Andrews-Pfannkoch C."/>
            <person name="Baldwin D."/>
            <person name="Ballew R.M."/>
            <person name="Basu A."/>
            <person name="Baxendale J."/>
            <person name="Bayraktaroglu L."/>
            <person name="Beasley E.M."/>
            <person name="Beeson K.Y."/>
            <person name="Benos P.V."/>
            <person name="Berman B.P."/>
            <person name="Bhandari D."/>
            <person name="Bolshakov S."/>
            <person name="Borkova D."/>
            <person name="Botchan M.R."/>
            <person name="Bouck J."/>
            <person name="Brokstein P."/>
            <person name="Brottier P."/>
            <person name="Burtis K.C."/>
            <person name="Busam D.A."/>
            <person name="Butler H."/>
            <person name="Cadieu E."/>
            <person name="Center A."/>
            <person name="Chandra I."/>
            <person name="Cherry J.M."/>
            <person name="Cawley S."/>
            <person name="Dahlke C."/>
            <person name="Davenport L.B."/>
            <person name="Davies P."/>
            <person name="de Pablos B."/>
            <person name="Delcher A."/>
            <person name="Deng Z."/>
            <person name="Mays A.D."/>
            <person name="Dew I."/>
            <person name="Dietz S.M."/>
            <person name="Dodson K."/>
            <person name="Doup L.E."/>
            <person name="Downes M."/>
            <person name="Dugan-Rocha S."/>
            <person name="Dunkov B.C."/>
            <person name="Dunn P."/>
            <person name="Durbin K.J."/>
            <person name="Evangelista C.C."/>
            <person name="Ferraz C."/>
            <person name="Ferriera S."/>
            <person name="Fleischmann W."/>
            <person name="Fosler C."/>
            <person name="Gabrielian A.E."/>
            <person name="Garg N.S."/>
            <person name="Gelbart W.M."/>
            <person name="Glasser K."/>
            <person name="Glodek A."/>
            <person name="Gong F."/>
            <person name="Gorrell J.H."/>
            <person name="Gu Z."/>
            <person name="Guan P."/>
            <person name="Harris M."/>
            <person name="Harris N.L."/>
            <person name="Harvey D.A."/>
            <person name="Heiman T.J."/>
            <person name="Hernandez J.R."/>
            <person name="Houck J."/>
            <person name="Hostin D."/>
            <person name="Houston K.A."/>
            <person name="Howland T.J."/>
            <person name="Wei M.-H."/>
            <person name="Ibegwam C."/>
            <person name="Jalali M."/>
            <person name="Kalush F."/>
            <person name="Karpen G.H."/>
            <person name="Ke Z."/>
            <person name="Kennison J.A."/>
            <person name="Ketchum K.A."/>
            <person name="Kimmel B.E."/>
            <person name="Kodira C.D."/>
            <person name="Kraft C.L."/>
            <person name="Kravitz S."/>
            <person name="Kulp D."/>
            <person name="Lai Z."/>
            <person name="Lasko P."/>
            <person name="Lei Y."/>
            <person name="Levitsky A.A."/>
            <person name="Li J.H."/>
            <person name="Li Z."/>
            <person name="Liang Y."/>
            <person name="Lin X."/>
            <person name="Liu X."/>
            <person name="Mattei B."/>
            <person name="McIntosh T.C."/>
            <person name="McLeod M.P."/>
            <person name="McPherson D."/>
            <person name="Merkulov G."/>
            <person name="Milshina N.V."/>
            <person name="Mobarry C."/>
            <person name="Morris J."/>
            <person name="Moshrefi A."/>
            <person name="Mount S.M."/>
            <person name="Moy M."/>
            <person name="Murphy B."/>
            <person name="Murphy L."/>
            <person name="Muzny D.M."/>
            <person name="Nelson D.L."/>
            <person name="Nelson D.R."/>
            <person name="Nelson K.A."/>
            <person name="Nixon K."/>
            <person name="Nusskern D.R."/>
            <person name="Pacleb J.M."/>
            <person name="Palazzolo M."/>
            <person name="Pittman G.S."/>
            <person name="Pan S."/>
            <person name="Pollard J."/>
            <person name="Puri V."/>
            <person name="Reese M.G."/>
            <person name="Reinert K."/>
            <person name="Remington K."/>
            <person name="Saunders R.D.C."/>
            <person name="Scheeler F."/>
            <person name="Shen H."/>
            <person name="Shue B.C."/>
            <person name="Siden-Kiamos I."/>
            <person name="Simpson M."/>
            <person name="Skupski M.P."/>
            <person name="Smith T.J."/>
            <person name="Spier E."/>
            <person name="Spradling A.C."/>
            <person name="Stapleton M."/>
            <person name="Strong R."/>
            <person name="Sun E."/>
            <person name="Svirskas R."/>
            <person name="Tector C."/>
            <person name="Turner R."/>
            <person name="Venter E."/>
            <person name="Wang A.H."/>
            <person name="Wang X."/>
            <person name="Wang Z.-Y."/>
            <person name="Wassarman D.A."/>
            <person name="Weinstock G.M."/>
            <person name="Weissenbach J."/>
            <person name="Williams S.M."/>
            <person name="Woodage T."/>
            <person name="Worley K.C."/>
            <person name="Wu D."/>
            <person name="Yang S."/>
            <person name="Yao Q.A."/>
            <person name="Ye J."/>
            <person name="Yeh R.-F."/>
            <person name="Zaveri J.S."/>
            <person name="Zhan M."/>
            <person name="Zhang G."/>
            <person name="Zhao Q."/>
            <person name="Zheng L."/>
            <person name="Zheng X.H."/>
            <person name="Zhong F.N."/>
            <person name="Zhong W."/>
            <person name="Zhou X."/>
            <person name="Zhu S.C."/>
            <person name="Zhu X."/>
            <person name="Smith H.O."/>
            <person name="Gibbs R.A."/>
            <person name="Myers E.W."/>
            <person name="Rubin G.M."/>
            <person name="Venter J.C."/>
        </authorList>
    </citation>
    <scope>NUCLEOTIDE SEQUENCE [LARGE SCALE GENOMIC DNA]</scope>
    <source>
        <strain evidence="14">Berkeley</strain>
    </source>
</reference>
<reference evidence="14" key="3">
    <citation type="journal article" date="2002" name="Genome Biol.">
        <title>Annotation of the Drosophila melanogaster euchromatic genome: a systematic review.</title>
        <authorList>
            <person name="Misra S."/>
            <person name="Crosby M.A."/>
            <person name="Mungall C.J."/>
            <person name="Matthews B.B."/>
            <person name="Campbell K.S."/>
            <person name="Hradecky P."/>
            <person name="Huang Y."/>
            <person name="Kaminker J.S."/>
            <person name="Millburn G.H."/>
            <person name="Prochnik S.E."/>
            <person name="Smith C.D."/>
            <person name="Tupy J.L."/>
            <person name="Whitfield E.J."/>
            <person name="Bayraktaroglu L."/>
            <person name="Berman B.P."/>
            <person name="Bettencourt B.R."/>
            <person name="Celniker S.E."/>
            <person name="de Grey A.D.N.J."/>
            <person name="Drysdale R.A."/>
            <person name="Harris N.L."/>
            <person name="Richter J."/>
            <person name="Russo S."/>
            <person name="Schroeder A.J."/>
            <person name="Shu S.Q."/>
            <person name="Stapleton M."/>
            <person name="Yamada C."/>
            <person name="Ashburner M."/>
            <person name="Gelbart W.M."/>
            <person name="Rubin G.M."/>
            <person name="Lewis S.E."/>
        </authorList>
    </citation>
    <scope>GENOME REANNOTATION</scope>
    <source>
        <strain evidence="14">Berkeley</strain>
    </source>
</reference>
<reference evidence="12" key="4">
    <citation type="journal article" date="2002" name="Genome Biol.">
        <title>A Drosophila full-length cDNA resource.</title>
        <authorList>
            <person name="Stapleton M."/>
            <person name="Carlson J.W."/>
            <person name="Brokstein P."/>
            <person name="Yu C."/>
            <person name="Champe M."/>
            <person name="George R.A."/>
            <person name="Guarin H."/>
            <person name="Kronmiller B."/>
            <person name="Pacleb J.M."/>
            <person name="Park S."/>
            <person name="Wan K.H."/>
            <person name="Rubin G.M."/>
            <person name="Celniker S.E."/>
        </authorList>
    </citation>
    <scope>NUCLEOTIDE SEQUENCE [LARGE SCALE MRNA]</scope>
    <source>
        <strain evidence="12">Berkeley</strain>
        <tissue evidence="12">Embryo</tissue>
    </source>
</reference>
<reference evidence="11" key="5">
    <citation type="journal article" date="2012" name="J. Biol. Chem.">
        <title>Apoptosis-dependent externalization and involvement in apoptotic cell clearance of DmCaBP1, an endoplasmic reticulum protein of Drosophila.</title>
        <authorList>
            <person name="Okada R."/>
            <person name="Nagaosa K."/>
            <person name="Kuraishi T."/>
            <person name="Nakayama H."/>
            <person name="Yamamoto N."/>
            <person name="Nakagawa Y."/>
            <person name="Dohmae N."/>
            <person name="Shiratsuchi A."/>
            <person name="Nakanishi Y."/>
        </authorList>
    </citation>
    <scope>FUNCTION</scope>
    <scope>INTERACTION WITH DRPR</scope>
    <scope>SUBCELLULAR LOCATION</scope>
    <scope>DEVELOPMENTAL STAGE</scope>
    <scope>DISRUPTION PHENOTYPE</scope>
    <scope>IDENTIFICATION BY MASS SPECTROMETRY</scope>
</reference>
<comment type="function">
    <text evidence="8">Binds to both apoptotic cells and phagocytes and promotes Drpr-dependent phagocytosis of apoptotic cells.</text>
</comment>
<comment type="catalytic activity">
    <reaction evidence="1">
        <text>Catalyzes the rearrangement of -S-S- bonds in proteins.</text>
        <dbReference type="EC" id="5.3.4.1"/>
    </reaction>
</comment>
<comment type="subunit">
    <text evidence="8">Interacts with Drpr (via extracellular region).</text>
</comment>
<comment type="subcellular location">
    <subcellularLocation>
        <location evidence="8">Endoplasmic reticulum lumen</location>
    </subcellularLocation>
    <subcellularLocation>
        <location evidence="8">Cell surface</location>
    </subcellularLocation>
    <text evidence="8">Relocates from the endoplasmic reticulum to the cell surface during apoptosis.</text>
</comment>
<comment type="tissue specificity">
    <text evidence="9">In the blastoderm embryo, expression starts at the anterior and posterior poles and later appears as broad stripes. Following gastrulation, expressed in midline precursor cells and the posterior head with low levels present throughout the embryo. During germ band extension, weak dorsoventral stripes of expression are evident. Midline expression begins and is retained throughout embryogenesis in clusters of cells in each segment in the central nervous system. At least some of the midline expression occurs in VUM neurons.</text>
</comment>
<comment type="developmental stage">
    <text evidence="8">Expressed throughout development from embryo to adult.</text>
</comment>
<comment type="disruption phenotype">
    <text evidence="8">Reduced levels of phagocytosis. Loss of both CaBP1 and Prtp does not cause a further decrease in the reduced level of phagocytosis seen in either CaBP1-lacking or Prtp-lacking embryos.</text>
</comment>
<comment type="similarity">
    <text evidence="2 6">Belongs to the protein disulfide isomerase family.</text>
</comment>
<protein>
    <recommendedName>
        <fullName evidence="11">Protein disulfide-isomerase A6 homolog</fullName>
        <ecNumber evidence="1">5.3.4.1</ecNumber>
    </recommendedName>
    <alternativeName>
        <fullName evidence="13">Calcium-binding protein 1</fullName>
        <shortName evidence="10">DmCaBP1</shortName>
    </alternativeName>
</protein>